<dbReference type="EC" id="2.7.1.130" evidence="1"/>
<dbReference type="EMBL" id="CP000038">
    <property type="protein sequence ID" value="AAZ87656.1"/>
    <property type="molecule type" value="Genomic_DNA"/>
</dbReference>
<dbReference type="RefSeq" id="WP_000570540.1">
    <property type="nucleotide sequence ID" value="NC_007384.1"/>
</dbReference>
<dbReference type="SMR" id="Q3Z3K6"/>
<dbReference type="GeneID" id="93776500"/>
<dbReference type="KEGG" id="ssn:SSON_0917"/>
<dbReference type="HOGENOM" id="CLU_038816_2_0_6"/>
<dbReference type="UniPathway" id="UPA00359">
    <property type="reaction ID" value="UER00482"/>
</dbReference>
<dbReference type="Proteomes" id="UP000002529">
    <property type="component" value="Chromosome"/>
</dbReference>
<dbReference type="GO" id="GO:0005886">
    <property type="term" value="C:plasma membrane"/>
    <property type="evidence" value="ECO:0007669"/>
    <property type="project" value="TreeGrafter"/>
</dbReference>
<dbReference type="GO" id="GO:0005524">
    <property type="term" value="F:ATP binding"/>
    <property type="evidence" value="ECO:0007669"/>
    <property type="project" value="UniProtKB-UniRule"/>
</dbReference>
<dbReference type="GO" id="GO:0009029">
    <property type="term" value="F:tetraacyldisaccharide 4'-kinase activity"/>
    <property type="evidence" value="ECO:0007669"/>
    <property type="project" value="UniProtKB-UniRule"/>
</dbReference>
<dbReference type="GO" id="GO:0009245">
    <property type="term" value="P:lipid A biosynthetic process"/>
    <property type="evidence" value="ECO:0007669"/>
    <property type="project" value="UniProtKB-UniRule"/>
</dbReference>
<dbReference type="GO" id="GO:0009244">
    <property type="term" value="P:lipopolysaccharide core region biosynthetic process"/>
    <property type="evidence" value="ECO:0007669"/>
    <property type="project" value="TreeGrafter"/>
</dbReference>
<dbReference type="HAMAP" id="MF_00409">
    <property type="entry name" value="LpxK"/>
    <property type="match status" value="1"/>
</dbReference>
<dbReference type="InterPro" id="IPR003758">
    <property type="entry name" value="LpxK"/>
</dbReference>
<dbReference type="InterPro" id="IPR027417">
    <property type="entry name" value="P-loop_NTPase"/>
</dbReference>
<dbReference type="NCBIfam" id="TIGR00682">
    <property type="entry name" value="lpxK"/>
    <property type="match status" value="1"/>
</dbReference>
<dbReference type="PANTHER" id="PTHR42724">
    <property type="entry name" value="TETRAACYLDISACCHARIDE 4'-KINASE"/>
    <property type="match status" value="1"/>
</dbReference>
<dbReference type="PANTHER" id="PTHR42724:SF1">
    <property type="entry name" value="TETRAACYLDISACCHARIDE 4'-KINASE, MITOCHONDRIAL-RELATED"/>
    <property type="match status" value="1"/>
</dbReference>
<dbReference type="Pfam" id="PF02606">
    <property type="entry name" value="LpxK"/>
    <property type="match status" value="1"/>
</dbReference>
<dbReference type="SUPFAM" id="SSF52540">
    <property type="entry name" value="P-loop containing nucleoside triphosphate hydrolases"/>
    <property type="match status" value="1"/>
</dbReference>
<name>LPXK_SHISS</name>
<protein>
    <recommendedName>
        <fullName evidence="1">Tetraacyldisaccharide 4'-kinase</fullName>
        <ecNumber evidence="1">2.7.1.130</ecNumber>
    </recommendedName>
    <alternativeName>
        <fullName evidence="1">Lipid A 4'-kinase</fullName>
    </alternativeName>
</protein>
<sequence>MIEKIWSGESPLWRLLLPLSWLYGLVSGAIRLCYKLKLKRAWRAPVPVVVVGNLTAGGNGKTPVVVWLVEQLQQRGIRVGVVSRGYGGKAESYPLLLSADTTTAQAGDEPVLIYQRTDAPVAVSPVRSDAVKAILAQHPDVQIIVTDDGLQHYRLARDVEIVVIDGVRRFGNGWWLPAGPMRERAGRLKSVDAVIVNGGVPRSGEIPMHLLPGQAVNLRTGTRCDVAQLEHVVAMAGIGHPPRFFATLKMCGVQPEKCVPLADHQSLNHADVSALVSAGQTLVMTEKDAVKCRAFAEENWWYLPVDAQLSGDEPAKLLTQLTSLASGN</sequence>
<proteinExistence type="inferred from homology"/>
<comment type="function">
    <text evidence="1">Transfers the gamma-phosphate of ATP to the 4'-position of a tetraacyldisaccharide 1-phosphate intermediate (termed DS-1-P) to form tetraacyldisaccharide 1,4'-bis-phosphate (lipid IVA).</text>
</comment>
<comment type="catalytic activity">
    <reaction evidence="1">
        <text>a lipid A disaccharide + ATP = a lipid IVA + ADP + H(+)</text>
        <dbReference type="Rhea" id="RHEA:67840"/>
        <dbReference type="ChEBI" id="CHEBI:15378"/>
        <dbReference type="ChEBI" id="CHEBI:30616"/>
        <dbReference type="ChEBI" id="CHEBI:176343"/>
        <dbReference type="ChEBI" id="CHEBI:176425"/>
        <dbReference type="ChEBI" id="CHEBI:456216"/>
        <dbReference type="EC" id="2.7.1.130"/>
    </reaction>
</comment>
<comment type="pathway">
    <text evidence="1">Glycolipid biosynthesis; lipid IV(A) biosynthesis; lipid IV(A) from (3R)-3-hydroxytetradecanoyl-[acyl-carrier-protein] and UDP-N-acetyl-alpha-D-glucosamine: step 6/6.</text>
</comment>
<comment type="similarity">
    <text evidence="1">Belongs to the LpxK family.</text>
</comment>
<gene>
    <name evidence="1" type="primary">lpxK</name>
    <name type="ordered locus">SSON_0917</name>
</gene>
<evidence type="ECO:0000255" key="1">
    <source>
        <dbReference type="HAMAP-Rule" id="MF_00409"/>
    </source>
</evidence>
<reference key="1">
    <citation type="journal article" date="2005" name="Nucleic Acids Res.">
        <title>Genome dynamics and diversity of Shigella species, the etiologic agents of bacillary dysentery.</title>
        <authorList>
            <person name="Yang F."/>
            <person name="Yang J."/>
            <person name="Zhang X."/>
            <person name="Chen L."/>
            <person name="Jiang Y."/>
            <person name="Yan Y."/>
            <person name="Tang X."/>
            <person name="Wang J."/>
            <person name="Xiong Z."/>
            <person name="Dong J."/>
            <person name="Xue Y."/>
            <person name="Zhu Y."/>
            <person name="Xu X."/>
            <person name="Sun L."/>
            <person name="Chen S."/>
            <person name="Nie H."/>
            <person name="Peng J."/>
            <person name="Xu J."/>
            <person name="Wang Y."/>
            <person name="Yuan Z."/>
            <person name="Wen Y."/>
            <person name="Yao Z."/>
            <person name="Shen Y."/>
            <person name="Qiang B."/>
            <person name="Hou Y."/>
            <person name="Yu J."/>
            <person name="Jin Q."/>
        </authorList>
    </citation>
    <scope>NUCLEOTIDE SEQUENCE [LARGE SCALE GENOMIC DNA]</scope>
    <source>
        <strain>Ss046</strain>
    </source>
</reference>
<organism>
    <name type="scientific">Shigella sonnei (strain Ss046)</name>
    <dbReference type="NCBI Taxonomy" id="300269"/>
    <lineage>
        <taxon>Bacteria</taxon>
        <taxon>Pseudomonadati</taxon>
        <taxon>Pseudomonadota</taxon>
        <taxon>Gammaproteobacteria</taxon>
        <taxon>Enterobacterales</taxon>
        <taxon>Enterobacteriaceae</taxon>
        <taxon>Shigella</taxon>
    </lineage>
</organism>
<accession>Q3Z3K6</accession>
<feature type="chain" id="PRO_0000229982" description="Tetraacyldisaccharide 4'-kinase">
    <location>
        <begin position="1"/>
        <end position="328"/>
    </location>
</feature>
<feature type="binding site" evidence="1">
    <location>
        <begin position="55"/>
        <end position="62"/>
    </location>
    <ligand>
        <name>ATP</name>
        <dbReference type="ChEBI" id="CHEBI:30616"/>
    </ligand>
</feature>
<keyword id="KW-0067">ATP-binding</keyword>
<keyword id="KW-0418">Kinase</keyword>
<keyword id="KW-0441">Lipid A biosynthesis</keyword>
<keyword id="KW-0444">Lipid biosynthesis</keyword>
<keyword id="KW-0443">Lipid metabolism</keyword>
<keyword id="KW-0547">Nucleotide-binding</keyword>
<keyword id="KW-1185">Reference proteome</keyword>
<keyword id="KW-0808">Transferase</keyword>